<sequence>MTMAPDVRLEYLEEVASIVLKFKPDKWSKLIGAEENVALFTEFFEKPDVQVLVLTLNAAGMIIPCLGFPQSLKSKGVYFIKTKSENINKDNYRARLLYGDISPTPVDQLIAVVEEVLSSLLNQSENMAGWPQVVSEDIVKQVHRLKNEMFVMSGKIKGKTLLPIPEHLGSLDGTLESMERIPSSLDNLLLHAIETTIIDWSHQIRDVLSKDSAQALLDGLHPLPQVEFEFWDTRLLNLKCIHEQLNRPKVNKIVEILEKAKSCYWPALQNVYTNVTEGLKEANDIVLYLKPLRILLEEMEQADFTMLPTFIAKVLDTICFIWATSEYYNTPARIIVILQEFCNQIIEMTRTFLSPEEVLKGLQGEIEEVLSGISLAVNVLKELYQTYDFCCVNMKLFFKDKEPVPWEFPSSLAFSRINSFFQRIQTIEELYKTAIEFLKLEKIELGGVRGNLLGSLVTRIYDEVFELVKVFADCKYDPLDPGDSNFDRDYADFEIKIQDLDRRLATIFCQGFDDCSCIKSSAKLLYMCGGLMERPLILAEVAPRYSVMLELFDAELDNAKILYDAQMAASEEGNIPLIHKNMPPVAGQLKWSLELQERLEVSMKHLKHVEHPVMSGAEAKLTYQKYDEMMELLRCHREKIYQQWVAGVDQDCHFNLGQPLILRDAASNLIHVNFSKALVAVLREVKYLNFQQQKEIPDSAESLFSENETFRKFVGNLELIVGWYNEIKTIVKAVEFLLIKSELEAIDVKLLSAETTLFWNGEGVFQYIQEVREILHNLQNRMQKAKQNIEGISQAMKDWSANPLFERKDNKKEALLDLDGRIANLNKRYAAVRDAGVKIQAMVAENAELFRADTLSLPWKDYVIYIDDMVLDEFDQFIRKSLSFLMDNMVIDESIAPLFEIRMELDEDGLTFNPTLEVGSDRGFLALIEGLVNDIYNVARLIPRLAKDRMNYKMDLEDNTDLIEMREEVSSLVINAMKEAEEYQDSFERYSYLWTDNLQEFMKNFLIYGCAVTAEDLDTWTDDTIPKTPPTLAQFQEQIDSYEKLYEEVSKCENTKVFHGWLQCDCRPFKQALLSTIRRWGFMFKRHLSNHVTNSLADLEAFMKVARMGLTKPLKEGDYDGLVEVMGHLMKVKERQAATDNMFEPLKQTIELLKTYGEEMPEEIHLKLQELPEHWANTKKLAIQVKLTVAPLQANEVSILRRKCQQFELKQHEFRERFRREAPFSFSDPNPYKSLNKQQKSISAMEGIMEALSKSGGLFEVPVPDYKQLKACHREVRLLKELWDMVVVVNTSIEDWKTTKWKDINVEQMDIDCKKFAKDMRSLDKEMKTWDAFVGLDNTVKNVITSLRAVSELQNPAIRERHWQQLMQATQVKFKMSEETTLADLLQLNLHSYEDEVRNIVDKAVKESGMEKVLKALDSTWSMMEFQHEPHPRTGTMMLKSSEVLVETLEDNQVQLQNLMMSKYLAHFLKEVTSWQQKLSTADSVISIWFEVQRTWSHLESIFIGSEDIRTQLPGDSQRFDDINQEFKALMEDAVKTPNVVEATSKPGLYNKLEALKKSLAICEKALAEYLETKRLAFPRFYFVSSADLLDILSNGNDPVEVSRHLSKLFDSLCKLKFRLDASDKPLKVGLGMYSKEDEYMVFDQECDLSGQVEVWLNRVLDRMCSTLRHEIPEAVVTYEEKPREQWILDYPAQVALTCTQIWWTTEVGLAFARLEEGYENAIRDYNKKQISQLNVLITLLMGNLNAGDRMKIMTICTIDVHARDVVAKMIVAKVESSQAFTWQAQLRHRWDEEKRHCFANICDAQIQYSYEYLGNTPRLVITPLTDRCYITLTQSLHLIMGGAPAGPAGTGKTETTKDLGRALGTMVYVFNCSEQMDYKSCGNIYKGLAQTGAWGCFDEFNRISVEVLSVIAVQVKCVQDAIRAKKKAFNFLGEIIGLIPTVGIFITMNPGYAGRAELPENLKALFRPCAMVVPDFELICEIMLMAEGFLEARLLARKFITLYTLCKELLSKQDHYDWGLRAIKSVLVVAGSLKRGDPSRAEDQVLMRALRDFNIPKIVTDDLPVFMGLIGDLFPALDVPRKRDLNFEKIIKQSIVELKLQAEDSFVLKVVQLEELLQVRHSVFIVGNAGSGKSQVLKSLNKTYQNLKRKPVAVDLDPKAVTCDELFGIINPVTREWKDGLFSTIMRDLANITHDGPKWIILDGDIDPMWIESLNTVMDDNKVLTLASNERIPLNRTMRLVFEISHLRTATPATVSRAGILYINPADLGWNPVVSSWIERRKVQSEKANLMILFDKYLPTCLDKLRFGFKKITPVPEITVIQTILYLLECLLTEKTVPPDSPRELYELYFVFTCFWAFGGAMFQDQLVDYRVEFSKWWINEFKTIKFPSQGTIFDYYIDPDTKKFLPWTDKVPSFELDPDVPLQASLVHTTETIRIRYFMDLLMEKSWPVMLVGNAGTGKSVLMGDKLESLNTDNYLVQAVPFNFYTTSAMLQGVLEKPLEKKSGRNYGPPGTKKLVYFIDDMNMPEVDKYGTVAPHTLIRQHMDHRHWYDRHKLTLKDIHNCQYVACMNPTSGSFTIDSRLQRHFCVFAVSFPGQEALTTIYNTILTQHLAFRSVSMAIQRISSQLVAAALALHQKITATFLPTAIKFHYVFNLRDLSNIFQGLLFSTAEVLKTPLDLVRLWLHETERVYGDKMVDEKDQETLHRVTMASTKKFFDDLGDELLFAKPNIFCHFAQGIGDPKYVPVTDMAPLNKLLVDVLDSYNEVNAVMNLVLFEDAVAHICRINRILESPRGNALLVGVGGSGKQSLSRLAAYISGLDVFQITLKKGYGIPDLKIDLAAQYIKAAVKNVPSVFLMTDSQVAEEQFLVLINDLLASGEIPGLFMEDEVENIISSMRPQVKSLGMNDTRETCWKFFIEKVRRQLKVILCFSPVGSVLRVRARKFPAVVNCTAIDWFHEWPEDALVSVSARFLEETEGIPWEVKASISFFMSYVHTTVNEMSRVYLATERRYNYTTPKTFLEQIKLYQNLLAKKRTELVAKIERLENGLMKLQSTASQVDDLKAKLAIQEAELKQKNESADQLIQVVGIEAEKVSKEKAIADQEEVKVEVINKNVTEKQKACETDLAKAEPALLAAQEALDTLNKNNLTELKSFGSPPDAVVNVTAAVMILTAPGGKIPKDKSWKAAKIMMGKVDTFLDSLKKFDKEHIPEACLKAFKPYQGNPTFDPEFIRSKSTAAAGLCSWCINIVRFYEVYCDVAPKRQALEEANAELAEAQEKLSRIKNKIAELNANLSNLTSAFEKATAEKIKCQQEADATNRVILLANRLVGGLASENIRWAESVENFRSQGVTLCGDVLLISAFVSYVGYFTKKYRNELMEKFWIPYIHNLKVPIPITNGLDPLSLLTDDADVATWNNQGLPSDRMSTENATILGNTERWPLIVDAQLQGIKWIKNKYRSELKAIRLGQKSYLDVIEQAISEGDTLLIENIGETVDPVLDPLLGRNTIKKGKYIKIGDKEVEYHPKFRLILHTKYFNPHYKPEMQAQCTLINFLVTRDGLEDQLLAAVVAKERPDLEQLKANLTKSQNEFKIVLKELEDSLLARLSAASGNFLGDTALVENLETTKHTASEIEEKVVEAKITEVKINEARENYRPAAERASLLYFILNDLNKINPVYQFSLKAFNVVFEKAIQRTTPANEVKQRVINLTDEITYSVYMYTARGLFERDKLIFLAQVTFQVLSMKKELNPVELDFLLRFPFKAGVVSPVDFLQHQGWGGIKALSEMDEFKNLDSDIEGSAKRWKKLVESEAPEKEIFPKEWKNKTALQKLCMVRCLRPDRMTYAIKNFVEEKMGSKFVEGRSVEFSKSYEESSPSTSIFFILSPGVDPLKDVEALGKKLGFTIDNGKLHNVSLGQGQEVVAENALDVAAEKGHWVILQNIHLVARWLGTLDKKLEHYSTGSHEDYRVFISAEPAPSPETHIIPQGILENAIKITNEPPTGMHANLHKALDLFTQDTLEMCTKEMEFKCMLFALCYFHAVVAERRKFGAQGWNRSYPFNNGDLTISINVLYNYLEANPKVPWDDLRYLFGEIMYGGHITDDWDRRLCRTYLAEYIRTEMLEGDVLLAPGFQIPPNLDYKGYHEYIDENLPPESPYLYGLHPNAEIGFLTVTSEKLFRTVLEMQPKETDSGAGTGVSREEKVKAVLDDILEKIPETFNMAEIMAKAAEKTPYVVVAFQECERMNILTNEMRRSLKELNLGLKGELTITTDVEDLSTALFYDTVPDTWVARAYPSMMGLAAWYADLLLRIRELEAWTTDFALPTTVWLAGFFNPQSFLTAIMQSMARKNEWPLDKMCLSVEVTKKNREDMTAPPREGSYVYGLFMEGARWDTQTGVIAEARLKELTPAMPVIFIKAIPVDRMETKNIYECPVYKTRIRGPTYVWTFNLKTKEKAAKWILAAVALLLQV</sequence>
<name>DYH17_HUMAN</name>
<feature type="chain" id="PRO_0000323749" description="Dynein axonemal heavy chain 17">
    <location>
        <begin position="1"/>
        <end position="4462"/>
    </location>
</feature>
<feature type="repeat" description="TPR 1">
    <location>
        <begin position="1019"/>
        <end position="1052"/>
    </location>
</feature>
<feature type="repeat" description="TPR 2">
    <location>
        <begin position="1702"/>
        <end position="1736"/>
    </location>
</feature>
<feature type="repeat" description="TPR 3">
    <location>
        <begin position="4147"/>
        <end position="4182"/>
    </location>
</feature>
<feature type="region of interest" description="Stem" evidence="1">
    <location>
        <begin position="1"/>
        <end position="1808"/>
    </location>
</feature>
<feature type="region of interest" description="AAA 1" evidence="1">
    <location>
        <begin position="1809"/>
        <end position="2030"/>
    </location>
</feature>
<feature type="region of interest" description="AAA 2" evidence="1">
    <location>
        <begin position="2090"/>
        <end position="2311"/>
    </location>
</feature>
<feature type="region of interest" description="AAA 3" evidence="1">
    <location>
        <begin position="2417"/>
        <end position="2665"/>
    </location>
</feature>
<feature type="region of interest" description="AAA 4" evidence="1">
    <location>
        <begin position="2763"/>
        <end position="3012"/>
    </location>
</feature>
<feature type="region of interest" description="Stalk" evidence="1">
    <location>
        <begin position="3027"/>
        <end position="3313"/>
    </location>
</feature>
<feature type="region of interest" description="AAA 5" evidence="1">
    <location>
        <begin position="3405"/>
        <end position="3632"/>
    </location>
</feature>
<feature type="region of interest" description="AAA 6" evidence="1">
    <location>
        <begin position="3842"/>
        <end position="4068"/>
    </location>
</feature>
<feature type="coiled-coil region" evidence="2">
    <location>
        <begin position="3027"/>
        <end position="3086"/>
    </location>
</feature>
<feature type="coiled-coil region" evidence="2">
    <location>
        <begin position="3257"/>
        <end position="3309"/>
    </location>
</feature>
<feature type="binding site" evidence="2">
    <location>
        <begin position="1847"/>
        <end position="1854"/>
    </location>
    <ligand>
        <name>ATP</name>
        <dbReference type="ChEBI" id="CHEBI:30616"/>
    </ligand>
</feature>
<feature type="binding site" evidence="2">
    <location>
        <begin position="2128"/>
        <end position="2135"/>
    </location>
    <ligand>
        <name>ATP</name>
        <dbReference type="ChEBI" id="CHEBI:30616"/>
    </ligand>
</feature>
<feature type="binding site" evidence="2">
    <location>
        <begin position="2455"/>
        <end position="2462"/>
    </location>
    <ligand>
        <name>ATP</name>
        <dbReference type="ChEBI" id="CHEBI:30616"/>
    </ligand>
</feature>
<feature type="binding site" evidence="2">
    <location>
        <begin position="2801"/>
        <end position="2808"/>
    </location>
    <ligand>
        <name>ATP</name>
        <dbReference type="ChEBI" id="CHEBI:30616"/>
    </ligand>
</feature>
<feature type="splice variant" id="VSP_032109" description="In isoform 4." evidence="5 6">
    <location>
        <begin position="1"/>
        <end position="298"/>
    </location>
</feature>
<feature type="splice variant" id="VSP_032110" description="In isoform 4." evidence="5 6">
    <original>ENAELFRADTLSLPWKDYVI</original>
    <variation>VRKHPGGFLRTHLLLAGRRE</variation>
    <location>
        <begin position="845"/>
        <end position="864"/>
    </location>
</feature>
<feature type="splice variant" id="VSP_032111" description="In isoform 4." evidence="5 6">
    <location>
        <begin position="865"/>
        <end position="4462"/>
    </location>
</feature>
<feature type="sequence variant" id="VAR_083232" description="In SPGF39." evidence="3">
    <location>
        <begin position="431"/>
        <end position="4462"/>
    </location>
</feature>
<feature type="sequence variant" id="VAR_039581" description="In dbSNP:rs34868091.">
    <original>D</original>
    <variation>N</variation>
    <location>
        <position position="492"/>
    </location>
</feature>
<feature type="sequence variant" id="VAR_062178" description="In dbSNP:rs16971526.">
    <original>I</original>
    <variation>V</variation>
    <location>
        <position position="792"/>
    </location>
</feature>
<feature type="sequence variant" id="VAR_062179" description="In dbSNP:rs11651537.">
    <original>I</original>
    <variation>T</variation>
    <location>
        <position position="963"/>
    </location>
</feature>
<feature type="sequence variant" id="VAR_083233" description="In SPGF39; loss of the outer dynein arms in sperm cells; dbSNP:rs1598595659." evidence="3">
    <original>C</original>
    <variation>Y</variation>
    <location>
        <position position="1829"/>
    </location>
</feature>
<feature type="sequence variant" id="VAR_062180" description="In dbSNP:rs1462210081.">
    <original>M</original>
    <variation>V</variation>
    <location>
        <position position="1972"/>
    </location>
</feature>
<feature type="sequence variant" id="VAR_083234" description="In SPGF39; loss of the outer dynein arms in sperm cells." evidence="3">
    <original>V</original>
    <variation>VLDPV</variation>
    <location>
        <position position="3496"/>
    </location>
</feature>
<feature type="sequence variant" id="VAR_083235" description="In SPGF39; when associated in cis with P-3595; not expressed in flagellum and loss of the outer dynein arms in sperm cells when associated in cis with P-3595; dbSNP:rs1598474055." evidence="3">
    <original>P</original>
    <variation>L</variation>
    <location>
        <position position="3499"/>
    </location>
</feature>
<feature type="sequence variant" id="VAR_083236" description="In SPGF39; when associated in cis with L-3499; not expressed in flagellum and loss of the outer dynein arms in sperm cells when associated in cis with L-3499; dbSNP:rs1418782829." evidence="3">
    <original>L</original>
    <variation>P</variation>
    <location>
        <position position="3595"/>
    </location>
</feature>
<feature type="sequence conflict" description="In Ref. 2; BAC05170." evidence="7" ref="2">
    <original>K</original>
    <variation>N</variation>
    <location>
        <position position="732"/>
    </location>
</feature>
<feature type="sequence conflict" description="In Ref. 2; BAC05170." evidence="7" ref="2">
    <original>Q</original>
    <variation>H</variation>
    <location>
        <position position="779"/>
    </location>
</feature>
<feature type="sequence conflict" description="In Ref. 4; CAB06053." evidence="7" ref="4">
    <original>GRA</original>
    <variation>DRP</variation>
    <location>
        <begin position="1861"/>
        <end position="1863"/>
    </location>
</feature>
<feature type="sequence conflict" description="In Ref. 4; CAB06053." evidence="7" ref="4">
    <original>S</original>
    <variation>Y</variation>
    <location>
        <position position="1910"/>
    </location>
</feature>
<feature type="sequence conflict" description="In Ref. 4; CAB06053." evidence="7" ref="4">
    <original>A</original>
    <variation>K</variation>
    <location>
        <position position="1929"/>
    </location>
</feature>
<feature type="sequence conflict" description="In Ref. 4; CAB06053." evidence="7" ref="4">
    <original>GLI</original>
    <variation>SLV</variation>
    <location>
        <begin position="1938"/>
        <end position="1940"/>
    </location>
</feature>
<feature type="sequence conflict" description="In Ref. 6; CAA04165." evidence="7" ref="6">
    <original>I</original>
    <variation>T</variation>
    <location>
        <position position="3478"/>
    </location>
</feature>
<feature type="sequence conflict" description="In Ref. 6; CAA04165." evidence="7" ref="6">
    <original>V</original>
    <variation>A</variation>
    <location>
        <position position="3496"/>
    </location>
</feature>
<feature type="sequence conflict" description="In Ref. 6; CAA04165." evidence="7" ref="6">
    <original>A</original>
    <variation>T</variation>
    <location>
        <position position="3615"/>
    </location>
</feature>
<feature type="sequence conflict" description="In Ref. 5; CAB59252." evidence="7" ref="5">
    <original>H</original>
    <variation>R</variation>
    <location>
        <position position="3953"/>
    </location>
</feature>
<feature type="sequence conflict" description="In Ref. 6; CAA04165." evidence="7" ref="6">
    <original>S</original>
    <variation>R</variation>
    <location>
        <position position="3958"/>
    </location>
</feature>
<feature type="sequence conflict" description="In Ref. 6; CAA04165." evidence="7" ref="6">
    <original>S</original>
    <variation>R</variation>
    <location>
        <position position="3967"/>
    </location>
</feature>
<feature type="sequence conflict" description="In Ref. 6; CAA04165." evidence="7" ref="6">
    <original>H</original>
    <variation>Y</variation>
    <location>
        <position position="3999"/>
    </location>
</feature>
<feature type="sequence conflict" description="In Ref. 6; CAA04165." evidence="7" ref="6">
    <original>H</original>
    <variation>Y</variation>
    <location>
        <position position="4003"/>
    </location>
</feature>
<feature type="sequence conflict" description="In Ref. 6; CAA04165." evidence="7" ref="6">
    <original>F</original>
    <variation>L</variation>
    <location>
        <position position="4331"/>
    </location>
</feature>
<feature type="sequence conflict" description="In Ref. 6; CAA04165." evidence="7" ref="6">
    <original>D</original>
    <variation>A</variation>
    <location>
        <position position="4414"/>
    </location>
</feature>
<organism>
    <name type="scientific">Homo sapiens</name>
    <name type="common">Human</name>
    <dbReference type="NCBI Taxonomy" id="9606"/>
    <lineage>
        <taxon>Eukaryota</taxon>
        <taxon>Metazoa</taxon>
        <taxon>Chordata</taxon>
        <taxon>Craniata</taxon>
        <taxon>Vertebrata</taxon>
        <taxon>Euteleostomi</taxon>
        <taxon>Mammalia</taxon>
        <taxon>Eutheria</taxon>
        <taxon>Euarchontoglires</taxon>
        <taxon>Primates</taxon>
        <taxon>Haplorrhini</taxon>
        <taxon>Catarrhini</taxon>
        <taxon>Hominidae</taxon>
        <taxon>Homo</taxon>
    </lineage>
</organism>
<comment type="function">
    <text evidence="3 8">Force generating protein component of the outer dynein arms (ODAs) in the sperm flagellum. Produces force towards the minus ends of microtubules. Dynein has ATPase activity; the force-producing power stroke is thought to occur on release of ADP (Probable). Plays a major role in sperm motility, implicated in sperm flagellar assembly and beating (PubMed:31178125).</text>
</comment>
<comment type="subunit">
    <text>Consists of at least two heavy chains and a number of intermediate and light chains.</text>
</comment>
<comment type="subcellular location">
    <subcellularLocation>
        <location evidence="3">Cytoplasm</location>
        <location evidence="3">Cytoskeleton</location>
        <location evidence="3">Flagellum axoneme</location>
    </subcellularLocation>
</comment>
<comment type="alternative products">
    <event type="alternative splicing"/>
    <isoform>
        <id>Q9UFH2-1</id>
        <name>1</name>
        <sequence type="displayed"/>
    </isoform>
    <isoform>
        <id>Q9UFH2-4</id>
        <name>4</name>
        <sequence type="described" ref="VSP_032109 VSP_032110 VSP_032111"/>
    </isoform>
</comment>
<comment type="tissue specificity">
    <text evidence="3 4">Expressed in testis (PubMed:9545504). Expressed in spermatozoa (at protein level). Not detected in airway epithelial cells (at protein level) (PubMed:31178125).</text>
</comment>
<comment type="developmental stage">
    <text evidence="3">Expression is detected in the germ cells from the early spermatocyte to late spermatid stages but not in the somatic cells (Leydig, Sertoli cells).</text>
</comment>
<comment type="domain">
    <text evidence="1">Dynein heavy chains probably consist of an N-terminal stem (which binds cargo and interacts with other dynein components), and the head or motor domain. The motor contains six tandemly-linked AAA domains in the head, which form a ring. A stalk-like structure (formed by two of the coiled coil domains) protrudes between AAA 4 and AAA 5 and terminates in a microtubule-binding site. A seventh domain may also contribute to this ring; it is not clear whether the N-terminus or the C-terminus forms this extra domain. There are four well-conserved and two non-conserved ATPase sites, one per AAA domain. Probably only one of these (within AAA 1) actually hydrolyzes ATP, the others may serve a regulatory function (By similarity).</text>
</comment>
<comment type="disease" evidence="3">
    <disease id="DI-05668">
        <name>Spermatogenic failure 39</name>
        <acronym>SPGF39</acronym>
        <description>An autosomal recessive infertility disorder characterized by asthenoteratozoospermia. Spermatozoa exhibit multiple morphologic anomalies including short, absent, irregularly shaped and coiled flagella, and abnormalities of the head and midpiece.</description>
        <dbReference type="MIM" id="618643"/>
    </disease>
    <text>The disease is caused by variants affecting the gene represented in this entry.</text>
</comment>
<comment type="miscellaneous">
    <molecule>Isoform 1</molecule>
    <text evidence="7">Gene prediction based on partial mRNA data.</text>
</comment>
<comment type="similarity">
    <text evidence="7">Belongs to the dynein heavy chain family.</text>
</comment>
<comment type="sequence caution" evidence="7">
    <conflict type="frameshift">
        <sequence resource="EMBL-CDS" id="CAA04165"/>
    </conflict>
</comment>
<comment type="sequence caution" evidence="7">
    <conflict type="erroneous initiation">
        <sequence resource="EMBL-CDS" id="CAB59252"/>
    </conflict>
    <text>Truncated N-terminus.</text>
</comment>
<keyword id="KW-0025">Alternative splicing</keyword>
<keyword id="KW-0067">ATP-binding</keyword>
<keyword id="KW-0966">Cell projection</keyword>
<keyword id="KW-0969">Cilium</keyword>
<keyword id="KW-0175">Coiled coil</keyword>
<keyword id="KW-0963">Cytoplasm</keyword>
<keyword id="KW-0206">Cytoskeleton</keyword>
<keyword id="KW-0225">Disease variant</keyword>
<keyword id="KW-0243">Dynein</keyword>
<keyword id="KW-0282">Flagellum</keyword>
<keyword id="KW-0493">Microtubule</keyword>
<keyword id="KW-0505">Motor protein</keyword>
<keyword id="KW-0547">Nucleotide-binding</keyword>
<keyword id="KW-1267">Proteomics identification</keyword>
<keyword id="KW-1185">Reference proteome</keyword>
<keyword id="KW-0677">Repeat</keyword>
<keyword id="KW-0802">TPR repeat</keyword>
<dbReference type="EMBL" id="AC016182">
    <property type="status" value="NOT_ANNOTATED_CDS"/>
    <property type="molecule type" value="Genomic_DNA"/>
</dbReference>
<dbReference type="EMBL" id="AC061992">
    <property type="status" value="NOT_ANNOTATED_CDS"/>
    <property type="molecule type" value="Genomic_DNA"/>
</dbReference>
<dbReference type="EMBL" id="KF510431">
    <property type="status" value="NOT_ANNOTATED_CDS"/>
    <property type="molecule type" value="Genomic_DNA"/>
</dbReference>
<dbReference type="EMBL" id="AK097776">
    <property type="protein sequence ID" value="BAC05170.1"/>
    <property type="molecule type" value="mRNA"/>
</dbReference>
<dbReference type="EMBL" id="BC105107">
    <property type="status" value="NOT_ANNOTATED_CDS"/>
    <property type="molecule type" value="mRNA"/>
</dbReference>
<dbReference type="EMBL" id="Z83799">
    <property type="protein sequence ID" value="CAB06053.1"/>
    <property type="molecule type" value="mRNA"/>
</dbReference>
<dbReference type="EMBL" id="AL122077">
    <property type="protein sequence ID" value="CAB59252.1"/>
    <property type="status" value="ALT_INIT"/>
    <property type="molecule type" value="mRNA"/>
</dbReference>
<dbReference type="EMBL" id="AJ000522">
    <property type="protein sequence ID" value="CAA04165.1"/>
    <property type="status" value="ALT_FRAME"/>
    <property type="molecule type" value="mRNA"/>
</dbReference>
<dbReference type="CCDS" id="CCDS11757.2">
    <molecule id="Q9UFH2-1"/>
</dbReference>
<dbReference type="PIR" id="T34558">
    <property type="entry name" value="T34558"/>
</dbReference>
<dbReference type="RefSeq" id="NP_775899.3">
    <molecule id="Q9UFH2-1"/>
    <property type="nucleotide sequence ID" value="NM_173628.4"/>
</dbReference>
<dbReference type="SMR" id="Q9UFH2"/>
<dbReference type="FunCoup" id="Q9UFH2">
    <property type="interactions" value="69"/>
</dbReference>
<dbReference type="IntAct" id="Q9UFH2">
    <property type="interactions" value="15"/>
</dbReference>
<dbReference type="MINT" id="Q9UFH2"/>
<dbReference type="STRING" id="9606.ENSP00000374490"/>
<dbReference type="GlyGen" id="Q9UFH2">
    <property type="glycosylation" value="4 sites, 1 O-linked glycan (3 sites)"/>
</dbReference>
<dbReference type="iPTMnet" id="Q9UFH2"/>
<dbReference type="PhosphoSitePlus" id="Q9UFH2"/>
<dbReference type="BioMuta" id="DNAH17"/>
<dbReference type="DMDM" id="172044714"/>
<dbReference type="jPOST" id="Q9UFH2"/>
<dbReference type="MassIVE" id="Q9UFH2"/>
<dbReference type="PaxDb" id="9606-ENSP00000374490"/>
<dbReference type="PeptideAtlas" id="Q9UFH2"/>
<dbReference type="ProteomicsDB" id="84185">
    <molecule id="Q9UFH2-1"/>
</dbReference>
<dbReference type="ProteomicsDB" id="84188">
    <molecule id="Q9UFH2-4"/>
</dbReference>
<dbReference type="Pumba" id="Q9UFH2"/>
<dbReference type="Antibodypedia" id="19739">
    <property type="antibodies" value="16 antibodies from 11 providers"/>
</dbReference>
<dbReference type="DNASU" id="8632"/>
<dbReference type="Ensembl" id="ENST00000389840.7">
    <molecule id="Q9UFH2-1"/>
    <property type="protein sequence ID" value="ENSP00000374490.6"/>
    <property type="gene ID" value="ENSG00000187775.17"/>
</dbReference>
<dbReference type="GeneID" id="8632"/>
<dbReference type="KEGG" id="hsa:8632"/>
<dbReference type="MANE-Select" id="ENST00000389840.7">
    <property type="protein sequence ID" value="ENSP00000374490.6"/>
    <property type="RefSeq nucleotide sequence ID" value="NM_173628.4"/>
    <property type="RefSeq protein sequence ID" value="NP_775899.3"/>
</dbReference>
<dbReference type="UCSC" id="uc010dhp.2">
    <molecule id="Q9UFH2-1"/>
    <property type="organism name" value="human"/>
</dbReference>
<dbReference type="AGR" id="HGNC:2946"/>
<dbReference type="CTD" id="8632"/>
<dbReference type="DisGeNET" id="8632"/>
<dbReference type="GeneCards" id="DNAH17"/>
<dbReference type="HGNC" id="HGNC:2946">
    <property type="gene designation" value="DNAH17"/>
</dbReference>
<dbReference type="HPA" id="ENSG00000187775">
    <property type="expression patterns" value="Group enriched (retina, testis)"/>
</dbReference>
<dbReference type="MalaCards" id="DNAH17"/>
<dbReference type="MIM" id="610063">
    <property type="type" value="gene"/>
</dbReference>
<dbReference type="MIM" id="618643">
    <property type="type" value="phenotype"/>
</dbReference>
<dbReference type="neXtProt" id="NX_Q9UFH2"/>
<dbReference type="OpenTargets" id="ENSG00000187775"/>
<dbReference type="Orphanet" id="276234">
    <property type="disease" value="Non-syndromic male infertility due to sperm motility disorder"/>
</dbReference>
<dbReference type="VEuPathDB" id="HostDB:ENSG00000187775"/>
<dbReference type="eggNOG" id="KOG3595">
    <property type="taxonomic scope" value="Eukaryota"/>
</dbReference>
<dbReference type="GeneTree" id="ENSGT00940000154076"/>
<dbReference type="InParanoid" id="Q9UFH2"/>
<dbReference type="OMA" id="QRENMAG"/>
<dbReference type="OrthoDB" id="286107at2759"/>
<dbReference type="PAN-GO" id="Q9UFH2">
    <property type="GO annotations" value="7 GO annotations based on evolutionary models"/>
</dbReference>
<dbReference type="PhylomeDB" id="Q9UFH2"/>
<dbReference type="TreeFam" id="TF316836"/>
<dbReference type="PathwayCommons" id="Q9UFH2"/>
<dbReference type="SignaLink" id="Q9UFH2"/>
<dbReference type="SIGNOR" id="Q9UFH2"/>
<dbReference type="ChiTaRS" id="DNAH17">
    <property type="organism name" value="human"/>
</dbReference>
<dbReference type="Pharos" id="Q9UFH2">
    <property type="development level" value="Tdark"/>
</dbReference>
<dbReference type="PRO" id="PR:Q9UFH2"/>
<dbReference type="Proteomes" id="UP000005640">
    <property type="component" value="Chromosome 17"/>
</dbReference>
<dbReference type="RNAct" id="Q9UFH2">
    <property type="molecule type" value="protein"/>
</dbReference>
<dbReference type="Bgee" id="ENSG00000187775">
    <property type="expression patterns" value="Expressed in C1 segment of cervical spinal cord and 113 other cell types or tissues"/>
</dbReference>
<dbReference type="ExpressionAtlas" id="Q9UFH2">
    <property type="expression patterns" value="baseline and differential"/>
</dbReference>
<dbReference type="GO" id="GO:0097729">
    <property type="term" value="C:9+2 motile cilium"/>
    <property type="evidence" value="ECO:0000318"/>
    <property type="project" value="GO_Central"/>
</dbReference>
<dbReference type="GO" id="GO:0005858">
    <property type="term" value="C:axonemal dynein complex"/>
    <property type="evidence" value="ECO:0000303"/>
    <property type="project" value="UniProtKB"/>
</dbReference>
<dbReference type="GO" id="GO:0005930">
    <property type="term" value="C:axoneme"/>
    <property type="evidence" value="ECO:0000314"/>
    <property type="project" value="UniProtKB"/>
</dbReference>
<dbReference type="GO" id="GO:0030286">
    <property type="term" value="C:dynein complex"/>
    <property type="evidence" value="ECO:0000318"/>
    <property type="project" value="GO_Central"/>
</dbReference>
<dbReference type="GO" id="GO:0005874">
    <property type="term" value="C:microtubule"/>
    <property type="evidence" value="ECO:0007669"/>
    <property type="project" value="UniProtKB-KW"/>
</dbReference>
<dbReference type="GO" id="GO:0036157">
    <property type="term" value="C:outer dynein arm"/>
    <property type="evidence" value="ECO:0000314"/>
    <property type="project" value="UniProtKB"/>
</dbReference>
<dbReference type="GO" id="GO:0036126">
    <property type="term" value="C:sperm flagellum"/>
    <property type="evidence" value="ECO:0000314"/>
    <property type="project" value="UniProtKB"/>
</dbReference>
<dbReference type="GO" id="GO:0005524">
    <property type="term" value="F:ATP binding"/>
    <property type="evidence" value="ECO:0007669"/>
    <property type="project" value="UniProtKB-KW"/>
</dbReference>
<dbReference type="GO" id="GO:0045505">
    <property type="term" value="F:dynein intermediate chain binding"/>
    <property type="evidence" value="ECO:0000318"/>
    <property type="project" value="GO_Central"/>
</dbReference>
<dbReference type="GO" id="GO:0051959">
    <property type="term" value="F:dynein light intermediate chain binding"/>
    <property type="evidence" value="ECO:0000318"/>
    <property type="project" value="GO_Central"/>
</dbReference>
<dbReference type="GO" id="GO:0003777">
    <property type="term" value="F:microtubule motor activity"/>
    <property type="evidence" value="ECO:0000303"/>
    <property type="project" value="UniProtKB"/>
</dbReference>
<dbReference type="GO" id="GO:0008569">
    <property type="term" value="F:minus-end-directed microtubule motor activity"/>
    <property type="evidence" value="ECO:0000318"/>
    <property type="project" value="GO_Central"/>
</dbReference>
<dbReference type="GO" id="GO:0060294">
    <property type="term" value="P:cilium movement involved in cell motility"/>
    <property type="evidence" value="ECO:0000318"/>
    <property type="project" value="GO_Central"/>
</dbReference>
<dbReference type="GO" id="GO:0060285">
    <property type="term" value="P:cilium-dependent cell motility"/>
    <property type="evidence" value="ECO:0000303"/>
    <property type="project" value="UniProtKB"/>
</dbReference>
<dbReference type="GO" id="GO:0036158">
    <property type="term" value="P:outer dynein arm assembly"/>
    <property type="evidence" value="ECO:0000314"/>
    <property type="project" value="UniProtKB"/>
</dbReference>
<dbReference type="FunFam" id="3.40.50.300:FF:001810">
    <property type="entry name" value="Cytoplasmic dynein 2 heavy chain 1"/>
    <property type="match status" value="1"/>
</dbReference>
<dbReference type="FunFam" id="1.10.287.2620:FF:000004">
    <property type="entry name" value="Dynein axonemal heavy chain 17"/>
    <property type="match status" value="1"/>
</dbReference>
<dbReference type="FunFam" id="1.20.1270.280:FF:000003">
    <property type="entry name" value="Dynein axonemal heavy chain 17"/>
    <property type="match status" value="1"/>
</dbReference>
<dbReference type="FunFam" id="1.20.920.20:FF:000003">
    <property type="entry name" value="Dynein axonemal heavy chain 17"/>
    <property type="match status" value="1"/>
</dbReference>
<dbReference type="FunFam" id="1.20.920.30:FF:000003">
    <property type="entry name" value="Dynein axonemal heavy chain 17"/>
    <property type="match status" value="1"/>
</dbReference>
<dbReference type="FunFam" id="3.10.490.20:FF:000002">
    <property type="entry name" value="Dynein axonemal heavy chain 17"/>
    <property type="match status" value="1"/>
</dbReference>
<dbReference type="FunFam" id="3.40.50.300:FF:000219">
    <property type="entry name" value="Dynein axonemal heavy chain 17"/>
    <property type="match status" value="1"/>
</dbReference>
<dbReference type="FunFam" id="3.40.50.300:FF:000682">
    <property type="entry name" value="Dynein axonemal heavy chain 17"/>
    <property type="match status" value="1"/>
</dbReference>
<dbReference type="FunFam" id="1.10.8.1220:FF:000001">
    <property type="entry name" value="Dynein axonemal heavy chain 5"/>
    <property type="match status" value="1"/>
</dbReference>
<dbReference type="FunFam" id="3.20.180.20:FF:000001">
    <property type="entry name" value="Dynein axonemal heavy chain 5"/>
    <property type="match status" value="1"/>
</dbReference>
<dbReference type="FunFam" id="1.20.140.100:FF:000007">
    <property type="entry name" value="Dynein axonemal heavy chain 9"/>
    <property type="match status" value="1"/>
</dbReference>
<dbReference type="FunFam" id="1.10.8.710:FF:000002">
    <property type="entry name" value="dynein heavy chain 17, axonemal"/>
    <property type="match status" value="1"/>
</dbReference>
<dbReference type="FunFam" id="3.40.50.300:FF:000411">
    <property type="entry name" value="dynein heavy chain 17, axonemal"/>
    <property type="match status" value="1"/>
</dbReference>
<dbReference type="FunFam" id="1.10.8.720:FF:000002">
    <property type="entry name" value="Dynein heavy chain 9, axonemal"/>
    <property type="match status" value="1"/>
</dbReference>
<dbReference type="FunFam" id="1.20.58.1120:FF:000002">
    <property type="entry name" value="Dynein heavy chain 9, axonemal"/>
    <property type="match status" value="1"/>
</dbReference>
<dbReference type="FunFam" id="3.40.50.300:FF:000049">
    <property type="entry name" value="Dynein, axonemal, heavy chain 5"/>
    <property type="match status" value="1"/>
</dbReference>
<dbReference type="FunFam" id="1.10.472.130:FF:000001">
    <property type="entry name" value="Dynein, axonemal, heavy chain 9"/>
    <property type="match status" value="1"/>
</dbReference>
<dbReference type="Gene3D" id="1.10.287.2620">
    <property type="match status" value="1"/>
</dbReference>
<dbReference type="Gene3D" id="1.10.472.130">
    <property type="match status" value="1"/>
</dbReference>
<dbReference type="Gene3D" id="1.10.8.1220">
    <property type="match status" value="1"/>
</dbReference>
<dbReference type="Gene3D" id="1.10.8.710">
    <property type="match status" value="1"/>
</dbReference>
<dbReference type="Gene3D" id="1.20.1270.280">
    <property type="match status" value="1"/>
</dbReference>
<dbReference type="Gene3D" id="1.20.58.1120">
    <property type="match status" value="1"/>
</dbReference>
<dbReference type="Gene3D" id="1.20.920.20">
    <property type="match status" value="1"/>
</dbReference>
<dbReference type="Gene3D" id="1.20.920.30">
    <property type="match status" value="1"/>
</dbReference>
<dbReference type="Gene3D" id="3.10.490.20">
    <property type="match status" value="1"/>
</dbReference>
<dbReference type="Gene3D" id="6.10.140.1060">
    <property type="match status" value="1"/>
</dbReference>
<dbReference type="Gene3D" id="1.20.140.100">
    <property type="entry name" value="Dynein heavy chain, N-terminal domain 2"/>
    <property type="match status" value="1"/>
</dbReference>
<dbReference type="Gene3D" id="3.20.180.20">
    <property type="entry name" value="Dynein heavy chain, N-terminal domain 2"/>
    <property type="match status" value="1"/>
</dbReference>
<dbReference type="Gene3D" id="3.40.50.300">
    <property type="entry name" value="P-loop containing nucleotide triphosphate hydrolases"/>
    <property type="match status" value="5"/>
</dbReference>
<dbReference type="Gene3D" id="1.10.8.720">
    <property type="entry name" value="Region D6 of dynein motor"/>
    <property type="match status" value="1"/>
</dbReference>
<dbReference type="InterPro" id="IPR035699">
    <property type="entry name" value="AAA_6"/>
</dbReference>
<dbReference type="InterPro" id="IPR035706">
    <property type="entry name" value="AAA_9"/>
</dbReference>
<dbReference type="InterPro" id="IPR041658">
    <property type="entry name" value="AAA_lid_11"/>
</dbReference>
<dbReference type="InterPro" id="IPR042219">
    <property type="entry name" value="AAA_lid_11_sf"/>
</dbReference>
<dbReference type="InterPro" id="IPR026983">
    <property type="entry name" value="DHC"/>
</dbReference>
<dbReference type="InterPro" id="IPR041589">
    <property type="entry name" value="DNAH3_AAA_lid_1"/>
</dbReference>
<dbReference type="InterPro" id="IPR042222">
    <property type="entry name" value="Dynein_2_N"/>
</dbReference>
<dbReference type="InterPro" id="IPR043157">
    <property type="entry name" value="Dynein_AAA1S"/>
</dbReference>
<dbReference type="InterPro" id="IPR041466">
    <property type="entry name" value="Dynein_AAA5_ext"/>
</dbReference>
<dbReference type="InterPro" id="IPR041228">
    <property type="entry name" value="Dynein_C"/>
</dbReference>
<dbReference type="InterPro" id="IPR043160">
    <property type="entry name" value="Dynein_C_barrel"/>
</dbReference>
<dbReference type="InterPro" id="IPR024743">
    <property type="entry name" value="Dynein_HC_stalk"/>
</dbReference>
<dbReference type="InterPro" id="IPR024317">
    <property type="entry name" value="Dynein_heavy_chain_D4_dom"/>
</dbReference>
<dbReference type="InterPro" id="IPR004273">
    <property type="entry name" value="Dynein_heavy_D6_P-loop"/>
</dbReference>
<dbReference type="InterPro" id="IPR013602">
    <property type="entry name" value="Dynein_heavy_linker"/>
</dbReference>
<dbReference type="InterPro" id="IPR013594">
    <property type="entry name" value="Dynein_heavy_tail"/>
</dbReference>
<dbReference type="InterPro" id="IPR042228">
    <property type="entry name" value="Dynein_linker_3"/>
</dbReference>
<dbReference type="InterPro" id="IPR027417">
    <property type="entry name" value="P-loop_NTPase"/>
</dbReference>
<dbReference type="PANTHER" id="PTHR45703:SF4">
    <property type="entry name" value="DYNEIN AXONEMAL HEAVY CHAIN 17"/>
    <property type="match status" value="1"/>
</dbReference>
<dbReference type="PANTHER" id="PTHR45703">
    <property type="entry name" value="DYNEIN HEAVY CHAIN"/>
    <property type="match status" value="1"/>
</dbReference>
<dbReference type="Pfam" id="PF12774">
    <property type="entry name" value="AAA_6"/>
    <property type="match status" value="1"/>
</dbReference>
<dbReference type="Pfam" id="PF12775">
    <property type="entry name" value="AAA_7"/>
    <property type="match status" value="1"/>
</dbReference>
<dbReference type="Pfam" id="PF12780">
    <property type="entry name" value="AAA_8"/>
    <property type="match status" value="1"/>
</dbReference>
<dbReference type="Pfam" id="PF12781">
    <property type="entry name" value="AAA_9"/>
    <property type="match status" value="1"/>
</dbReference>
<dbReference type="Pfam" id="PF17857">
    <property type="entry name" value="AAA_lid_1"/>
    <property type="match status" value="1"/>
</dbReference>
<dbReference type="Pfam" id="PF18198">
    <property type="entry name" value="AAA_lid_11"/>
    <property type="match status" value="1"/>
</dbReference>
<dbReference type="Pfam" id="PF08385">
    <property type="entry name" value="DHC_N1"/>
    <property type="match status" value="1"/>
</dbReference>
<dbReference type="Pfam" id="PF08393">
    <property type="entry name" value="DHC_N2"/>
    <property type="match status" value="1"/>
</dbReference>
<dbReference type="Pfam" id="PF17852">
    <property type="entry name" value="Dynein_AAA_lid"/>
    <property type="match status" value="1"/>
</dbReference>
<dbReference type="Pfam" id="PF18199">
    <property type="entry name" value="Dynein_C"/>
    <property type="match status" value="1"/>
</dbReference>
<dbReference type="Pfam" id="PF03028">
    <property type="entry name" value="Dynein_heavy"/>
    <property type="match status" value="1"/>
</dbReference>
<dbReference type="Pfam" id="PF12777">
    <property type="entry name" value="MT"/>
    <property type="match status" value="1"/>
</dbReference>
<dbReference type="SUPFAM" id="SSF52540">
    <property type="entry name" value="P-loop containing nucleoside triphosphate hydrolases"/>
    <property type="match status" value="4"/>
</dbReference>
<gene>
    <name evidence="9" type="primary">DNAH17</name>
    <name type="synonym">DNAHL1</name>
    <name type="synonym">DNEL2</name>
</gene>
<accession>Q9UFH2</accession>
<accession>O00431</accession>
<accession>O15206</accession>
<accession>Q2M2Y1</accession>
<accession>Q6ZRQ2</accession>
<accession>Q8N7Q7</accession>
<reference key="1">
    <citation type="journal article" date="2006" name="Nature">
        <title>DNA sequence of human chromosome 17 and analysis of rearrangement in the human lineage.</title>
        <authorList>
            <person name="Zody M.C."/>
            <person name="Garber M."/>
            <person name="Adams D.J."/>
            <person name="Sharpe T."/>
            <person name="Harrow J."/>
            <person name="Lupski J.R."/>
            <person name="Nicholson C."/>
            <person name="Searle S.M."/>
            <person name="Wilming L."/>
            <person name="Young S.K."/>
            <person name="Abouelleil A."/>
            <person name="Allen N.R."/>
            <person name="Bi W."/>
            <person name="Bloom T."/>
            <person name="Borowsky M.L."/>
            <person name="Bugalter B.E."/>
            <person name="Butler J."/>
            <person name="Chang J.L."/>
            <person name="Chen C.-K."/>
            <person name="Cook A."/>
            <person name="Corum B."/>
            <person name="Cuomo C.A."/>
            <person name="de Jong P.J."/>
            <person name="DeCaprio D."/>
            <person name="Dewar K."/>
            <person name="FitzGerald M."/>
            <person name="Gilbert J."/>
            <person name="Gibson R."/>
            <person name="Gnerre S."/>
            <person name="Goldstein S."/>
            <person name="Grafham D.V."/>
            <person name="Grocock R."/>
            <person name="Hafez N."/>
            <person name="Hagopian D.S."/>
            <person name="Hart E."/>
            <person name="Norman C.H."/>
            <person name="Humphray S."/>
            <person name="Jaffe D.B."/>
            <person name="Jones M."/>
            <person name="Kamal M."/>
            <person name="Khodiyar V.K."/>
            <person name="LaButti K."/>
            <person name="Laird G."/>
            <person name="Lehoczky J."/>
            <person name="Liu X."/>
            <person name="Lokyitsang T."/>
            <person name="Loveland J."/>
            <person name="Lui A."/>
            <person name="Macdonald P."/>
            <person name="Major J.E."/>
            <person name="Matthews L."/>
            <person name="Mauceli E."/>
            <person name="McCarroll S.A."/>
            <person name="Mihalev A.H."/>
            <person name="Mudge J."/>
            <person name="Nguyen C."/>
            <person name="Nicol R."/>
            <person name="O'Leary S.B."/>
            <person name="Osoegawa K."/>
            <person name="Schwartz D.C."/>
            <person name="Shaw-Smith C."/>
            <person name="Stankiewicz P."/>
            <person name="Steward C."/>
            <person name="Swarbreck D."/>
            <person name="Venkataraman V."/>
            <person name="Whittaker C.A."/>
            <person name="Yang X."/>
            <person name="Zimmer A.R."/>
            <person name="Bradley A."/>
            <person name="Hubbard T."/>
            <person name="Birren B.W."/>
            <person name="Rogers J."/>
            <person name="Lander E.S."/>
            <person name="Nusbaum C."/>
        </authorList>
    </citation>
    <scope>NUCLEOTIDE SEQUENCE [LARGE SCALE GENOMIC DNA]</scope>
</reference>
<reference key="2">
    <citation type="journal article" date="2004" name="Nat. Genet.">
        <title>Complete sequencing and characterization of 21,243 full-length human cDNAs.</title>
        <authorList>
            <person name="Ota T."/>
            <person name="Suzuki Y."/>
            <person name="Nishikawa T."/>
            <person name="Otsuki T."/>
            <person name="Sugiyama T."/>
            <person name="Irie R."/>
            <person name="Wakamatsu A."/>
            <person name="Hayashi K."/>
            <person name="Sato H."/>
            <person name="Nagai K."/>
            <person name="Kimura K."/>
            <person name="Makita H."/>
            <person name="Sekine M."/>
            <person name="Obayashi M."/>
            <person name="Nishi T."/>
            <person name="Shibahara T."/>
            <person name="Tanaka T."/>
            <person name="Ishii S."/>
            <person name="Yamamoto J."/>
            <person name="Saito K."/>
            <person name="Kawai Y."/>
            <person name="Isono Y."/>
            <person name="Nakamura Y."/>
            <person name="Nagahari K."/>
            <person name="Murakami K."/>
            <person name="Yasuda T."/>
            <person name="Iwayanagi T."/>
            <person name="Wagatsuma M."/>
            <person name="Shiratori A."/>
            <person name="Sudo H."/>
            <person name="Hosoiri T."/>
            <person name="Kaku Y."/>
            <person name="Kodaira H."/>
            <person name="Kondo H."/>
            <person name="Sugawara M."/>
            <person name="Takahashi M."/>
            <person name="Kanda K."/>
            <person name="Yokoi T."/>
            <person name="Furuya T."/>
            <person name="Kikkawa E."/>
            <person name="Omura Y."/>
            <person name="Abe K."/>
            <person name="Kamihara K."/>
            <person name="Katsuta N."/>
            <person name="Sato K."/>
            <person name="Tanikawa M."/>
            <person name="Yamazaki M."/>
            <person name="Ninomiya K."/>
            <person name="Ishibashi T."/>
            <person name="Yamashita H."/>
            <person name="Murakawa K."/>
            <person name="Fujimori K."/>
            <person name="Tanai H."/>
            <person name="Kimata M."/>
            <person name="Watanabe M."/>
            <person name="Hiraoka S."/>
            <person name="Chiba Y."/>
            <person name="Ishida S."/>
            <person name="Ono Y."/>
            <person name="Takiguchi S."/>
            <person name="Watanabe S."/>
            <person name="Yosida M."/>
            <person name="Hotuta T."/>
            <person name="Kusano J."/>
            <person name="Kanehori K."/>
            <person name="Takahashi-Fujii A."/>
            <person name="Hara H."/>
            <person name="Tanase T.-O."/>
            <person name="Nomura Y."/>
            <person name="Togiya S."/>
            <person name="Komai F."/>
            <person name="Hara R."/>
            <person name="Takeuchi K."/>
            <person name="Arita M."/>
            <person name="Imose N."/>
            <person name="Musashino K."/>
            <person name="Yuuki H."/>
            <person name="Oshima A."/>
            <person name="Sasaki N."/>
            <person name="Aotsuka S."/>
            <person name="Yoshikawa Y."/>
            <person name="Matsunawa H."/>
            <person name="Ichihara T."/>
            <person name="Shiohata N."/>
            <person name="Sano S."/>
            <person name="Moriya S."/>
            <person name="Momiyama H."/>
            <person name="Satoh N."/>
            <person name="Takami S."/>
            <person name="Terashima Y."/>
            <person name="Suzuki O."/>
            <person name="Nakagawa S."/>
            <person name="Senoh A."/>
            <person name="Mizoguchi H."/>
            <person name="Goto Y."/>
            <person name="Shimizu F."/>
            <person name="Wakebe H."/>
            <person name="Hishigaki H."/>
            <person name="Watanabe T."/>
            <person name="Sugiyama A."/>
            <person name="Takemoto M."/>
            <person name="Kawakami B."/>
            <person name="Yamazaki M."/>
            <person name="Watanabe K."/>
            <person name="Kumagai A."/>
            <person name="Itakura S."/>
            <person name="Fukuzumi Y."/>
            <person name="Fujimori Y."/>
            <person name="Komiyama M."/>
            <person name="Tashiro H."/>
            <person name="Tanigami A."/>
            <person name="Fujiwara T."/>
            <person name="Ono T."/>
            <person name="Yamada K."/>
            <person name="Fujii Y."/>
            <person name="Ozaki K."/>
            <person name="Hirao M."/>
            <person name="Ohmori Y."/>
            <person name="Kawabata A."/>
            <person name="Hikiji T."/>
            <person name="Kobatake N."/>
            <person name="Inagaki H."/>
            <person name="Ikema Y."/>
            <person name="Okamoto S."/>
            <person name="Okitani R."/>
            <person name="Kawakami T."/>
            <person name="Noguchi S."/>
            <person name="Itoh T."/>
            <person name="Shigeta K."/>
            <person name="Senba T."/>
            <person name="Matsumura K."/>
            <person name="Nakajima Y."/>
            <person name="Mizuno T."/>
            <person name="Morinaga M."/>
            <person name="Sasaki M."/>
            <person name="Togashi T."/>
            <person name="Oyama M."/>
            <person name="Hata H."/>
            <person name="Watanabe M."/>
            <person name="Komatsu T."/>
            <person name="Mizushima-Sugano J."/>
            <person name="Satoh T."/>
            <person name="Shirai Y."/>
            <person name="Takahashi Y."/>
            <person name="Nakagawa K."/>
            <person name="Okumura K."/>
            <person name="Nagase T."/>
            <person name="Nomura N."/>
            <person name="Kikuchi H."/>
            <person name="Masuho Y."/>
            <person name="Yamashita R."/>
            <person name="Nakai K."/>
            <person name="Yada T."/>
            <person name="Nakamura Y."/>
            <person name="Ohara O."/>
            <person name="Isogai T."/>
            <person name="Sugano S."/>
        </authorList>
    </citation>
    <scope>NUCLEOTIDE SEQUENCE [MRNA] OF 264-4462 (ISOFORM 4)</scope>
    <source>
        <tissue>Testis</tissue>
    </source>
</reference>
<reference key="3">
    <citation type="journal article" date="2004" name="Genome Res.">
        <title>The status, quality, and expansion of the NIH full-length cDNA project: the Mammalian Gene Collection (MGC).</title>
        <authorList>
            <consortium name="The MGC Project Team"/>
        </authorList>
    </citation>
    <scope>NUCLEOTIDE SEQUENCE [LARGE SCALE MRNA] OF 278-4462 (ISOFORM 4)</scope>
</reference>
<reference key="4">
    <citation type="journal article" date="1997" name="Gene">
        <title>Identification of dynein heavy chain genes expressed in human and mouse testis: chromosomal localization of an axonemal dynein gene.</title>
        <authorList>
            <person name="Neesen J."/>
            <person name="Koehler M.R."/>
            <person name="Kirschner R."/>
            <person name="Steinlein C."/>
            <person name="Kreutzberger J."/>
            <person name="Engel W."/>
            <person name="Schmid M."/>
        </authorList>
    </citation>
    <scope>NUCLEOTIDE SEQUENCE [MRNA] OF 1852-1952 (ISOFORM 1)</scope>
    <source>
        <tissue>Testis</tissue>
    </source>
</reference>
<reference key="5">
    <citation type="journal article" date="2007" name="BMC Genomics">
        <title>The full-ORF clone resource of the German cDNA consortium.</title>
        <authorList>
            <person name="Bechtel S."/>
            <person name="Rosenfelder H."/>
            <person name="Duda A."/>
            <person name="Schmidt C.P."/>
            <person name="Ernst U."/>
            <person name="Wellenreuther R."/>
            <person name="Mehrle A."/>
            <person name="Schuster C."/>
            <person name="Bahr A."/>
            <person name="Bloecker H."/>
            <person name="Heubner D."/>
            <person name="Hoerlein A."/>
            <person name="Michel G."/>
            <person name="Wedler H."/>
            <person name="Koehrer K."/>
            <person name="Ottenwaelder B."/>
            <person name="Poustka A."/>
            <person name="Wiemann S."/>
            <person name="Schupp I."/>
        </authorList>
    </citation>
    <scope>NUCLEOTIDE SEQUENCE [LARGE SCALE MRNA] OF 3185-4462 (ISOFORM 1)</scope>
    <source>
        <tissue>Testis</tissue>
    </source>
</reference>
<reference key="6">
    <citation type="journal article" date="1998" name="Mamm. Genome">
        <title>A potential human axonemal dynein heavy-chain gene maps to 17q25.</title>
        <authorList>
            <person name="Milisav I."/>
            <person name="Affara N.A."/>
        </authorList>
    </citation>
    <scope>NUCLEOTIDE SEQUENCE [MRNA] OF 3284-4462 (ISOFORM 1)</scope>
    <scope>TISSUE SPECIFICITY</scope>
    <source>
        <tissue>Testis</tissue>
    </source>
</reference>
<reference key="7">
    <citation type="journal article" date="2008" name="Proc. Natl. Acad. Sci. U.S.A.">
        <title>A quantitative atlas of mitotic phosphorylation.</title>
        <authorList>
            <person name="Dephoure N."/>
            <person name="Zhou C."/>
            <person name="Villen J."/>
            <person name="Beausoleil S.A."/>
            <person name="Bakalarski C.E."/>
            <person name="Elledge S.J."/>
            <person name="Gygi S.P."/>
        </authorList>
    </citation>
    <scope>IDENTIFICATION BY MASS SPECTROMETRY [LARGE SCALE ANALYSIS]</scope>
    <source>
        <tissue>Cervix carcinoma</tissue>
    </source>
</reference>
<reference key="8">
    <citation type="journal article" date="2019" name="Am. J. Hum. Genet.">
        <title>Mutations in DNAH17, Encoding a Sperm-Specific Axonemal Outer Dynein Arm Heavy Chain, Cause Isolated Male Infertility Due to Asthenozoospermia.</title>
        <authorList>
            <person name="Whitfield M."/>
            <person name="Thomas L."/>
            <person name="Bequignon E."/>
            <person name="Schmitt A."/>
            <person name="Stouvenel L."/>
            <person name="Montantin G."/>
            <person name="Tissier S."/>
            <person name="Duquesnoy P."/>
            <person name="Copin B."/>
            <person name="Chantot S."/>
            <person name="Dastot F."/>
            <person name="Faucon C."/>
            <person name="Barbotin A.L."/>
            <person name="Loyens A."/>
            <person name="Siffroi J.P."/>
            <person name="Papon J.F."/>
            <person name="Escudier E."/>
            <person name="Amselem S."/>
            <person name="Mitchell V."/>
            <person name="Toure A."/>
            <person name="Legendre M."/>
        </authorList>
    </citation>
    <scope>INVOLVEMENT IN SPGF39</scope>
    <scope>TISSUE SPECIFICITY</scope>
    <scope>SUBCELLULAR LOCATION</scope>
    <scope>VARIANTS SPGF39 431-TYR--VAL-4462 DEL; TYR-1829; LEU-ASP-PRO-VAL-3496 INS; LEU-3499 AND PRO-3595</scope>
    <scope>CHARACTERIZATION OF VARIANTS SPGF39 TYR-1829; LEU-ASP-PRO-VAL-3496 INS; LEU-3499 AND PRO-3595</scope>
    <scope>DEVELOPMENTAL STAGE</scope>
</reference>
<evidence type="ECO:0000250" key="1"/>
<evidence type="ECO:0000255" key="2"/>
<evidence type="ECO:0000269" key="3">
    <source>
    </source>
</evidence>
<evidence type="ECO:0000269" key="4">
    <source>
    </source>
</evidence>
<evidence type="ECO:0000303" key="5">
    <source>
    </source>
</evidence>
<evidence type="ECO:0000303" key="6">
    <source>
    </source>
</evidence>
<evidence type="ECO:0000305" key="7"/>
<evidence type="ECO:0000305" key="8">
    <source>
    </source>
</evidence>
<evidence type="ECO:0000312" key="9">
    <source>
        <dbReference type="HGNC" id="HGNC:2946"/>
    </source>
</evidence>
<proteinExistence type="evidence at protein level"/>
<protein>
    <recommendedName>
        <fullName evidence="7">Dynein axonemal heavy chain 17</fullName>
    </recommendedName>
    <alternativeName>
        <fullName>Axonemal beta dynein heavy chain 17</fullName>
    </alternativeName>
    <alternativeName>
        <fullName>Axonemal dynein heavy chain-like protein 1</fullName>
    </alternativeName>
    <alternativeName>
        <fullName>Ciliary dynein heavy chain 17</fullName>
    </alternativeName>
    <alternativeName>
        <fullName>Ciliary dynein heavy chain-like protein 1</fullName>
    </alternativeName>
    <alternativeName>
        <fullName>Dynein axonemal light chain 2</fullName>
    </alternativeName>
</protein>